<dbReference type="EMBL" id="Z30237">
    <property type="protein sequence ID" value="CAA82943.1"/>
    <property type="molecule type" value="Genomic_DNA"/>
</dbReference>
<dbReference type="PIR" id="S49164">
    <property type="entry name" value="S49164"/>
</dbReference>
<dbReference type="SMR" id="P52683"/>
<dbReference type="GO" id="GO:0003700">
    <property type="term" value="F:DNA-binding transcription factor activity"/>
    <property type="evidence" value="ECO:0007669"/>
    <property type="project" value="InterPro"/>
</dbReference>
<dbReference type="GO" id="GO:0043565">
    <property type="term" value="F:sequence-specific DNA binding"/>
    <property type="evidence" value="ECO:0007669"/>
    <property type="project" value="TreeGrafter"/>
</dbReference>
<dbReference type="GO" id="GO:0006351">
    <property type="term" value="P:DNA-templated transcription"/>
    <property type="evidence" value="ECO:0007669"/>
    <property type="project" value="TreeGrafter"/>
</dbReference>
<dbReference type="Gene3D" id="3.40.190.10">
    <property type="entry name" value="Periplasmic binding protein-like II"/>
    <property type="match status" value="2"/>
</dbReference>
<dbReference type="Gene3D" id="1.10.10.10">
    <property type="entry name" value="Winged helix-like DNA-binding domain superfamily/Winged helix DNA-binding domain"/>
    <property type="match status" value="1"/>
</dbReference>
<dbReference type="InterPro" id="IPR005119">
    <property type="entry name" value="LysR_subst-bd"/>
</dbReference>
<dbReference type="InterPro" id="IPR000847">
    <property type="entry name" value="Tscrpt_reg_HTH_LysR"/>
</dbReference>
<dbReference type="InterPro" id="IPR036388">
    <property type="entry name" value="WH-like_DNA-bd_sf"/>
</dbReference>
<dbReference type="InterPro" id="IPR036390">
    <property type="entry name" value="WH_DNA-bd_sf"/>
</dbReference>
<dbReference type="PANTHER" id="PTHR30537:SF70">
    <property type="entry name" value="HTH-TYPE TRANSCRIPTIONAL ACTIVATOR AMPR"/>
    <property type="match status" value="1"/>
</dbReference>
<dbReference type="PANTHER" id="PTHR30537">
    <property type="entry name" value="HTH-TYPE TRANSCRIPTIONAL REGULATOR"/>
    <property type="match status" value="1"/>
</dbReference>
<dbReference type="Pfam" id="PF00126">
    <property type="entry name" value="HTH_1"/>
    <property type="match status" value="1"/>
</dbReference>
<dbReference type="Pfam" id="PF03466">
    <property type="entry name" value="LysR_substrate"/>
    <property type="match status" value="1"/>
</dbReference>
<dbReference type="PRINTS" id="PR00039">
    <property type="entry name" value="HTHLYSR"/>
</dbReference>
<dbReference type="SUPFAM" id="SSF53850">
    <property type="entry name" value="Periplasmic binding protein-like II"/>
    <property type="match status" value="1"/>
</dbReference>
<dbReference type="SUPFAM" id="SSF46785">
    <property type="entry name" value="Winged helix' DNA-binding domain"/>
    <property type="match status" value="1"/>
</dbReference>
<dbReference type="PROSITE" id="PS50931">
    <property type="entry name" value="HTH_LYSR"/>
    <property type="match status" value="1"/>
</dbReference>
<accession>P52683</accession>
<evidence type="ECO:0000255" key="1">
    <source>
        <dbReference type="PROSITE-ProRule" id="PRU00253"/>
    </source>
</evidence>
<evidence type="ECO:0000305" key="2"/>
<name>SMER_SERMA</name>
<gene>
    <name type="primary">smeR</name>
    <name type="synonym">bplR</name>
</gene>
<comment type="function">
    <text>This protein is a positive regulator of gene expression of carbapenem-hydrolyzing beta-lactamase (smeA). Seems to also be a repressor of its own transcription.</text>
</comment>
<comment type="similarity">
    <text evidence="2">Belongs to the LysR transcriptional regulatory family.</text>
</comment>
<keyword id="KW-0010">Activator</keyword>
<keyword id="KW-0238">DNA-binding</keyword>
<keyword id="KW-0804">Transcription</keyword>
<keyword id="KW-0805">Transcription regulation</keyword>
<sequence>MKNRIPLNALRAFEASARYLNFTKAGLELHVSQAAVSQHVRTLEAILGVNLFKRLPRGLQLTEEGLHLLPMINEAFSIMGSALERFHEGKIREVITVAVVGTFAVGWLLPRLSGFTKSYPWIDIRVITHNNVINLAAEGIDAAIRFGHGFWQSTENYKLFSAPHTVLCPPNVAKKLTTPEDMKDYRLLRTYRKEEWSSWFKAANLKPWPVTGPIFDSSRHMDDAAKICGDIALAPYKMFIHEIENGSLVKPFDIEVHLGGYWLTILKSRSNIELNNALNIFKTWLLNASHSI</sequence>
<reference key="1">
    <citation type="journal article" date="1995" name="Antimicrob. Agents Chemother.">
        <title>Characterization of an LysR family protein, SmeR from Serratia marcescens S6, its effect on expression of the carbapenem-hydrolyzing beta-lactamase Sme-1, and comparison of this regulator with other beta-lactamase regulators.</title>
        <authorList>
            <person name="Naas T."/>
            <person name="Livermore D.M."/>
            <person name="Nordmann P."/>
        </authorList>
    </citation>
    <scope>NUCLEOTIDE SEQUENCE [GENOMIC DNA]</scope>
    <source>
        <strain>S6</strain>
    </source>
</reference>
<organism>
    <name type="scientific">Serratia marcescens</name>
    <dbReference type="NCBI Taxonomy" id="615"/>
    <lineage>
        <taxon>Bacteria</taxon>
        <taxon>Pseudomonadati</taxon>
        <taxon>Pseudomonadota</taxon>
        <taxon>Gammaproteobacteria</taxon>
        <taxon>Enterobacterales</taxon>
        <taxon>Yersiniaceae</taxon>
        <taxon>Serratia</taxon>
    </lineage>
</organism>
<proteinExistence type="inferred from homology"/>
<feature type="chain" id="PRO_0000105693" description="Carbapenem-hydrolyzing beta-lactamase transcriptional activator">
    <location>
        <begin position="1"/>
        <end position="292"/>
    </location>
</feature>
<feature type="domain" description="HTH lysR-type" evidence="1">
    <location>
        <begin position="5"/>
        <end position="62"/>
    </location>
</feature>
<feature type="DNA-binding region" description="H-T-H motif" evidence="1">
    <location>
        <begin position="22"/>
        <end position="41"/>
    </location>
</feature>
<protein>
    <recommendedName>
        <fullName>Carbapenem-hydrolyzing beta-lactamase transcriptional activator</fullName>
    </recommendedName>
</protein>